<organism>
    <name type="scientific">Picrophilus torridus (strain ATCC 700027 / DSM 9790 / JCM 10055 / NBRC 100828 / KAW 2/3)</name>
    <dbReference type="NCBI Taxonomy" id="1122961"/>
    <lineage>
        <taxon>Archaea</taxon>
        <taxon>Methanobacteriati</taxon>
        <taxon>Thermoplasmatota</taxon>
        <taxon>Thermoplasmata</taxon>
        <taxon>Thermoplasmatales</taxon>
        <taxon>Picrophilaceae</taxon>
        <taxon>Picrophilus</taxon>
    </lineage>
</organism>
<comment type="function">
    <text evidence="1">Functions in the biosynthesis of branched-chain amino acids. Catalyzes the dehydration of (2R,3R)-2,3-dihydroxy-3-methylpentanoate (2,3-dihydroxy-3-methylvalerate) into 2-oxo-3-methylpentanoate (2-oxo-3-methylvalerate) and of (2R)-2,3-dihydroxy-3-methylbutanoate (2,3-dihydroxyisovalerate) into 2-oxo-3-methylbutanoate (2-oxoisovalerate), the penultimate precursor to L-isoleucine and L-valine, respectively.</text>
</comment>
<comment type="catalytic activity">
    <reaction evidence="1">
        <text>(2R)-2,3-dihydroxy-3-methylbutanoate = 3-methyl-2-oxobutanoate + H2O</text>
        <dbReference type="Rhea" id="RHEA:24809"/>
        <dbReference type="ChEBI" id="CHEBI:11851"/>
        <dbReference type="ChEBI" id="CHEBI:15377"/>
        <dbReference type="ChEBI" id="CHEBI:49072"/>
        <dbReference type="EC" id="4.2.1.9"/>
    </reaction>
    <physiologicalReaction direction="left-to-right" evidence="1">
        <dbReference type="Rhea" id="RHEA:24810"/>
    </physiologicalReaction>
</comment>
<comment type="catalytic activity">
    <reaction evidence="1">
        <text>(2R,3R)-2,3-dihydroxy-3-methylpentanoate = (S)-3-methyl-2-oxopentanoate + H2O</text>
        <dbReference type="Rhea" id="RHEA:27694"/>
        <dbReference type="ChEBI" id="CHEBI:15377"/>
        <dbReference type="ChEBI" id="CHEBI:35146"/>
        <dbReference type="ChEBI" id="CHEBI:49258"/>
        <dbReference type="EC" id="4.2.1.9"/>
    </reaction>
    <physiologicalReaction direction="left-to-right" evidence="1">
        <dbReference type="Rhea" id="RHEA:27695"/>
    </physiologicalReaction>
</comment>
<comment type="cofactor">
    <cofactor evidence="1">
        <name>[2Fe-2S] cluster</name>
        <dbReference type="ChEBI" id="CHEBI:190135"/>
    </cofactor>
    <text evidence="1">Binds 1 [2Fe-2S] cluster per subunit. This cluster acts as a Lewis acid cofactor.</text>
</comment>
<comment type="cofactor">
    <cofactor evidence="1">
        <name>Mg(2+)</name>
        <dbReference type="ChEBI" id="CHEBI:18420"/>
    </cofactor>
</comment>
<comment type="pathway">
    <text evidence="1">Amino-acid biosynthesis; L-isoleucine biosynthesis; L-isoleucine from 2-oxobutanoate: step 3/4.</text>
</comment>
<comment type="pathway">
    <text evidence="1">Amino-acid biosynthesis; L-valine biosynthesis; L-valine from pyruvate: step 3/4.</text>
</comment>
<comment type="subunit">
    <text evidence="1">Homodimer.</text>
</comment>
<comment type="similarity">
    <text evidence="1">Belongs to the IlvD/Edd family.</text>
</comment>
<proteinExistence type="inferred from homology"/>
<accession>Q6KZ30</accession>
<sequence>MGSKEFYGGIEKSPNRSFLKAMGLTDKDISNGLVGVGVAWSESGPCNIHALSLGNKAAEGVSHSGMTPRLFATPLVIDGMAMGNEGMRYSLPSREVIANTVELTIKGHGFDAFVGISGCDKTTPGMLMGAARINVPSIVMYGGSTLPGYYMGKKIAVGDVYEAVGSYQAGRMTVEELKIMENSAVPTAGACGGLYTANTMAFMSEGLGMALTGSASPPAVDSGKTKFAFETGAAIKTLVENDIKPRDVMTYEAFENAITLLMASGGSTNVVLHLLAIAHEAHVNIKLDDFDRIGNKVPEIVNMKPGGPYTMAELNEIGGVPVVMKKLLDKGFLHGDVLTVTGKTLRENLNEIKILNIKQDIVYDIERPKMRTGGIKILRGNIAREGSVFKASASSVMKHTGPAKVFDGEEAAFRALMDNKIERGDVIVIRYEGPKGGPGMREMLAVTAAVVGKGFDRDVALITDGRFSGATRGIMIGHVAPEAFVGGEIALLKDGDVITIDGENGLLKASVSDEEFNRRRESWRPPEPKYSTGYLSQYAKLVGSASRGAVLE</sequence>
<evidence type="ECO:0000255" key="1">
    <source>
        <dbReference type="HAMAP-Rule" id="MF_00012"/>
    </source>
</evidence>
<reference key="1">
    <citation type="journal article" date="2004" name="Proc. Natl. Acad. Sci. U.S.A.">
        <title>Genome sequence of Picrophilus torridus and its implications for life around pH 0.</title>
        <authorList>
            <person name="Fuetterer O."/>
            <person name="Angelov A."/>
            <person name="Liesegang H."/>
            <person name="Gottschalk G."/>
            <person name="Schleper C."/>
            <person name="Schepers B."/>
            <person name="Dock C."/>
            <person name="Antranikian G."/>
            <person name="Liebl W."/>
        </authorList>
    </citation>
    <scope>NUCLEOTIDE SEQUENCE [LARGE SCALE GENOMIC DNA]</scope>
    <source>
        <strain>ATCC 700027 / DSM 9790 / JCM 10055 / NBRC 100828 / KAW 2/3</strain>
    </source>
</reference>
<keyword id="KW-0001">2Fe-2S</keyword>
<keyword id="KW-0028">Amino-acid biosynthesis</keyword>
<keyword id="KW-0100">Branched-chain amino acid biosynthesis</keyword>
<keyword id="KW-0408">Iron</keyword>
<keyword id="KW-0411">Iron-sulfur</keyword>
<keyword id="KW-0456">Lyase</keyword>
<keyword id="KW-0460">Magnesium</keyword>
<keyword id="KW-0479">Metal-binding</keyword>
<feature type="chain" id="PRO_0000103546" description="Dihydroxy-acid dehydratase">
    <location>
        <begin position="1"/>
        <end position="552"/>
    </location>
</feature>
<feature type="active site" description="Proton acceptor" evidence="1">
    <location>
        <position position="468"/>
    </location>
</feature>
<feature type="binding site" evidence="1">
    <location>
        <position position="46"/>
    </location>
    <ligand>
        <name>[2Fe-2S] cluster</name>
        <dbReference type="ChEBI" id="CHEBI:190135"/>
    </ligand>
</feature>
<feature type="binding site" evidence="1">
    <location>
        <position position="78"/>
    </location>
    <ligand>
        <name>Mg(2+)</name>
        <dbReference type="ChEBI" id="CHEBI:18420"/>
    </ligand>
</feature>
<feature type="binding site" evidence="1">
    <location>
        <position position="119"/>
    </location>
    <ligand>
        <name>[2Fe-2S] cluster</name>
        <dbReference type="ChEBI" id="CHEBI:190135"/>
    </ligand>
</feature>
<feature type="binding site" evidence="1">
    <location>
        <position position="120"/>
    </location>
    <ligand>
        <name>Mg(2+)</name>
        <dbReference type="ChEBI" id="CHEBI:18420"/>
    </ligand>
</feature>
<feature type="binding site" description="via carbamate group" evidence="1">
    <location>
        <position position="121"/>
    </location>
    <ligand>
        <name>Mg(2+)</name>
        <dbReference type="ChEBI" id="CHEBI:18420"/>
    </ligand>
</feature>
<feature type="binding site" evidence="1">
    <location>
        <position position="191"/>
    </location>
    <ligand>
        <name>[2Fe-2S] cluster</name>
        <dbReference type="ChEBI" id="CHEBI:190135"/>
    </ligand>
</feature>
<feature type="binding site" evidence="1">
    <location>
        <position position="442"/>
    </location>
    <ligand>
        <name>Mg(2+)</name>
        <dbReference type="ChEBI" id="CHEBI:18420"/>
    </ligand>
</feature>
<feature type="modified residue" description="N6-carboxylysine" evidence="1">
    <location>
        <position position="121"/>
    </location>
</feature>
<protein>
    <recommendedName>
        <fullName evidence="1">Dihydroxy-acid dehydratase</fullName>
        <shortName evidence="1">DAD</shortName>
        <ecNumber evidence="1">4.2.1.9</ecNumber>
    </recommendedName>
</protein>
<name>ILVD_PICTO</name>
<gene>
    <name evidence="1" type="primary">ilvD</name>
    <name type="ordered locus">PTO1437</name>
</gene>
<dbReference type="EC" id="4.2.1.9" evidence="1"/>
<dbReference type="EMBL" id="AE017261">
    <property type="protein sequence ID" value="AAT44022.1"/>
    <property type="molecule type" value="Genomic_DNA"/>
</dbReference>
<dbReference type="RefSeq" id="WP_011178238.1">
    <property type="nucleotide sequence ID" value="NC_005877.1"/>
</dbReference>
<dbReference type="SMR" id="Q6KZ30"/>
<dbReference type="FunCoup" id="Q6KZ30">
    <property type="interactions" value="192"/>
</dbReference>
<dbReference type="STRING" id="263820.PTO1437"/>
<dbReference type="PaxDb" id="263820-PTO1437"/>
<dbReference type="GeneID" id="2844756"/>
<dbReference type="KEGG" id="pto:PTO1437"/>
<dbReference type="PATRIC" id="fig|263820.9.peg.1491"/>
<dbReference type="eggNOG" id="arCOG04045">
    <property type="taxonomic scope" value="Archaea"/>
</dbReference>
<dbReference type="HOGENOM" id="CLU_014271_4_2_2"/>
<dbReference type="InParanoid" id="Q6KZ30"/>
<dbReference type="OrthoDB" id="8674at2157"/>
<dbReference type="UniPathway" id="UPA00047">
    <property type="reaction ID" value="UER00057"/>
</dbReference>
<dbReference type="UniPathway" id="UPA00049">
    <property type="reaction ID" value="UER00061"/>
</dbReference>
<dbReference type="Proteomes" id="UP000000438">
    <property type="component" value="Chromosome"/>
</dbReference>
<dbReference type="GO" id="GO:0051537">
    <property type="term" value="F:2 iron, 2 sulfur cluster binding"/>
    <property type="evidence" value="ECO:0007669"/>
    <property type="project" value="UniProtKB-UniRule"/>
</dbReference>
<dbReference type="GO" id="GO:0004160">
    <property type="term" value="F:dihydroxy-acid dehydratase activity"/>
    <property type="evidence" value="ECO:0007669"/>
    <property type="project" value="UniProtKB-UniRule"/>
</dbReference>
<dbReference type="GO" id="GO:0000287">
    <property type="term" value="F:magnesium ion binding"/>
    <property type="evidence" value="ECO:0007669"/>
    <property type="project" value="UniProtKB-UniRule"/>
</dbReference>
<dbReference type="GO" id="GO:0009097">
    <property type="term" value="P:isoleucine biosynthetic process"/>
    <property type="evidence" value="ECO:0007669"/>
    <property type="project" value="UniProtKB-UniRule"/>
</dbReference>
<dbReference type="GO" id="GO:0009099">
    <property type="term" value="P:L-valine biosynthetic process"/>
    <property type="evidence" value="ECO:0007669"/>
    <property type="project" value="UniProtKB-UniRule"/>
</dbReference>
<dbReference type="FunFam" id="3.50.30.80:FF:000001">
    <property type="entry name" value="Dihydroxy-acid dehydratase"/>
    <property type="match status" value="1"/>
</dbReference>
<dbReference type="Gene3D" id="3.50.30.80">
    <property type="entry name" value="IlvD/EDD C-terminal domain-like"/>
    <property type="match status" value="1"/>
</dbReference>
<dbReference type="HAMAP" id="MF_00012">
    <property type="entry name" value="IlvD"/>
    <property type="match status" value="1"/>
</dbReference>
<dbReference type="InterPro" id="IPR050165">
    <property type="entry name" value="DHAD_IlvD/Edd"/>
</dbReference>
<dbReference type="InterPro" id="IPR042096">
    <property type="entry name" value="Dihydro-acid_dehy_C"/>
</dbReference>
<dbReference type="InterPro" id="IPR004404">
    <property type="entry name" value="DihydroxyA_deHydtase"/>
</dbReference>
<dbReference type="InterPro" id="IPR020558">
    <property type="entry name" value="DiOHA_6PGluconate_deHydtase_CS"/>
</dbReference>
<dbReference type="InterPro" id="IPR056740">
    <property type="entry name" value="ILV_EDD_C"/>
</dbReference>
<dbReference type="InterPro" id="IPR000581">
    <property type="entry name" value="ILV_EDD_N"/>
</dbReference>
<dbReference type="InterPro" id="IPR037237">
    <property type="entry name" value="IlvD/EDD_N"/>
</dbReference>
<dbReference type="NCBIfam" id="TIGR00110">
    <property type="entry name" value="ilvD"/>
    <property type="match status" value="1"/>
</dbReference>
<dbReference type="NCBIfam" id="NF002068">
    <property type="entry name" value="PRK00911.1"/>
    <property type="match status" value="1"/>
</dbReference>
<dbReference type="PANTHER" id="PTHR21000">
    <property type="entry name" value="DIHYDROXY-ACID DEHYDRATASE DAD"/>
    <property type="match status" value="1"/>
</dbReference>
<dbReference type="PANTHER" id="PTHR21000:SF5">
    <property type="entry name" value="DIHYDROXY-ACID DEHYDRATASE, MITOCHONDRIAL"/>
    <property type="match status" value="1"/>
</dbReference>
<dbReference type="Pfam" id="PF24877">
    <property type="entry name" value="ILV_EDD_C"/>
    <property type="match status" value="1"/>
</dbReference>
<dbReference type="Pfam" id="PF00920">
    <property type="entry name" value="ILVD_EDD_N"/>
    <property type="match status" value="1"/>
</dbReference>
<dbReference type="SUPFAM" id="SSF143975">
    <property type="entry name" value="IlvD/EDD N-terminal domain-like"/>
    <property type="match status" value="1"/>
</dbReference>
<dbReference type="SUPFAM" id="SSF52016">
    <property type="entry name" value="LeuD/IlvD-like"/>
    <property type="match status" value="1"/>
</dbReference>
<dbReference type="PROSITE" id="PS00886">
    <property type="entry name" value="ILVD_EDD_1"/>
    <property type="match status" value="1"/>
</dbReference>
<dbReference type="PROSITE" id="PS00887">
    <property type="entry name" value="ILVD_EDD_2"/>
    <property type="match status" value="1"/>
</dbReference>